<reference key="1">
    <citation type="journal article" date="2000" name="Arch. Virol.">
        <title>Indian citrus ringspot virus: a proposed new species with some affinities to potex-, carla-, fovea- and allexiviruses.</title>
        <authorList>
            <person name="Rustici G."/>
            <person name="Accotto G.P."/>
            <person name="Noris E."/>
            <person name="Masenga V."/>
            <person name="Luisoni E."/>
            <person name="Milne R.G."/>
        </authorList>
    </citation>
    <scope>NUCLEOTIDE SEQUENCE [GENOMIC RNA]</scope>
</reference>
<reference key="2">
    <citation type="journal article" date="2002" name="Arch. Virol.">
        <title>Nucleotide sequence, genome organisation and phylogenetic analysis of Indian citrus ringspot virus.</title>
        <authorList>
            <person name="Rustici G."/>
            <person name="Milne R.G."/>
            <person name="Accotto G.P."/>
        </authorList>
    </citation>
    <scope>NUCLEOTIDE SEQUENCE [GENOMIC RNA]</scope>
</reference>
<evidence type="ECO:0000250" key="1"/>
<evidence type="ECO:0000255" key="2"/>
<evidence type="ECO:0000305" key="3"/>
<gene>
    <name type="ORF">ORF3</name>
</gene>
<keyword id="KW-1038">Host endoplasmic reticulum</keyword>
<keyword id="KW-1043">Host membrane</keyword>
<keyword id="KW-0472">Membrane</keyword>
<keyword id="KW-1185">Reference proteome</keyword>
<keyword id="KW-0812">Transmembrane</keyword>
<keyword id="KW-1133">Transmembrane helix</keyword>
<proteinExistence type="inferred from homology"/>
<accession>Q918W1</accession>
<organismHost>
    <name type="scientific">Citrus</name>
    <dbReference type="NCBI Taxonomy" id="2706"/>
</organismHost>
<name>TGB2_ICRSV</name>
<sequence>MPLQPPPDHTWAVRIIALGLAVTALIFTSTRDTSRHVGDPSHSLPFGGHYRDGSKVIHYNSPRSSKPSNHTPYLLFAPIGIILLIHALHRLGNSAHICRCTHCMPHSQT</sequence>
<protein>
    <recommendedName>
        <fullName>Movement protein TGB2</fullName>
    </recommendedName>
    <alternativeName>
        <fullName>Triple gene block 2 protein</fullName>
        <shortName>TGBp2</shortName>
    </alternativeName>
</protein>
<dbReference type="EMBL" id="AF406744">
    <property type="protein sequence ID" value="AAK97524.1"/>
    <property type="molecule type" value="Genomic_RNA"/>
</dbReference>
<dbReference type="RefSeq" id="NP_203555.1">
    <property type="nucleotide sequence ID" value="NC_003093.1"/>
</dbReference>
<dbReference type="SMR" id="Q918W1"/>
<dbReference type="KEGG" id="vg:922109"/>
<dbReference type="Proteomes" id="UP000000394">
    <property type="component" value="Segment"/>
</dbReference>
<dbReference type="GO" id="GO:0044167">
    <property type="term" value="C:host cell endoplasmic reticulum membrane"/>
    <property type="evidence" value="ECO:0007669"/>
    <property type="project" value="UniProtKB-SubCell"/>
</dbReference>
<dbReference type="GO" id="GO:0016020">
    <property type="term" value="C:membrane"/>
    <property type="evidence" value="ECO:0007669"/>
    <property type="project" value="UniProtKB-KW"/>
</dbReference>
<dbReference type="InterPro" id="IPR001896">
    <property type="entry name" value="Plant_vir_prot"/>
</dbReference>
<dbReference type="Pfam" id="PF01307">
    <property type="entry name" value="Plant_vir_prot"/>
    <property type="match status" value="1"/>
</dbReference>
<comment type="function">
    <text evidence="1">Plays a role in viral cell-to-cell propagation, by facilitating genome transport to neighboring plant cells through plasmosdesmata,.</text>
</comment>
<comment type="subcellular location">
    <subcellularLocation>
        <location evidence="1">Host endoplasmic reticulum membrane</location>
    </subcellularLocation>
</comment>
<comment type="miscellaneous">
    <text>TGBp1, TGBp2 and TGBp3 seem to act together for cell-to-cell propagation. TGBp1 is the main movement protein that physically cross the plasmodesma with the viral genome. TGBp2 and TGBp3 would facilitate TGBp1 function.</text>
</comment>
<comment type="similarity">
    <text evidence="3">Belongs to the Tymovirales TGBp2 protein family.</text>
</comment>
<feature type="chain" id="PRO_0000401080" description="Movement protein TGB2">
    <location>
        <begin position="1"/>
        <end position="109"/>
    </location>
</feature>
<feature type="topological domain" description="Cytoplasmic" evidence="1">
    <location>
        <begin position="1"/>
        <end position="9"/>
    </location>
</feature>
<feature type="transmembrane region" description="Helical" evidence="2">
    <location>
        <begin position="10"/>
        <end position="30"/>
    </location>
</feature>
<feature type="topological domain" description="Lumenal" evidence="1">
    <location>
        <begin position="31"/>
        <end position="71"/>
    </location>
</feature>
<feature type="transmembrane region" description="Helical" evidence="2">
    <location>
        <begin position="72"/>
        <end position="92"/>
    </location>
</feature>
<feature type="topological domain" description="Cytoplasmic" evidence="1">
    <location>
        <begin position="93"/>
        <end position="109"/>
    </location>
</feature>
<organism>
    <name type="scientific">Indian citrus ringspot virus (isolate Kinnow mandarin/India/K1/1996)</name>
    <name type="common">ICRSV</name>
    <dbReference type="NCBI Taxonomy" id="651357"/>
    <lineage>
        <taxon>Viruses</taxon>
        <taxon>Riboviria</taxon>
        <taxon>Orthornavirae</taxon>
        <taxon>Kitrinoviricota</taxon>
        <taxon>Alsuviricetes</taxon>
        <taxon>Tymovirales</taxon>
        <taxon>Alphaflexiviridae</taxon>
        <taxon>Potexvirus</taxon>
        <taxon>Mandarivirus</taxon>
        <taxon>Indian citrus ringspot virus</taxon>
    </lineage>
</organism>